<dbReference type="EMBL" id="AM494475">
    <property type="protein sequence ID" value="CAM79624.1"/>
    <property type="molecule type" value="Genomic_DNA"/>
</dbReference>
<dbReference type="RefSeq" id="WP_011944544.1">
    <property type="nucleotide sequence ID" value="NC_009488.1"/>
</dbReference>
<dbReference type="SMR" id="A5CCZ4"/>
<dbReference type="KEGG" id="ots:OTBS_0558"/>
<dbReference type="eggNOG" id="COG0292">
    <property type="taxonomic scope" value="Bacteria"/>
</dbReference>
<dbReference type="HOGENOM" id="CLU_123265_0_1_5"/>
<dbReference type="Proteomes" id="UP000001565">
    <property type="component" value="Chromosome"/>
</dbReference>
<dbReference type="GO" id="GO:1990904">
    <property type="term" value="C:ribonucleoprotein complex"/>
    <property type="evidence" value="ECO:0007669"/>
    <property type="project" value="UniProtKB-KW"/>
</dbReference>
<dbReference type="GO" id="GO:0005840">
    <property type="term" value="C:ribosome"/>
    <property type="evidence" value="ECO:0007669"/>
    <property type="project" value="UniProtKB-KW"/>
</dbReference>
<dbReference type="GO" id="GO:0019843">
    <property type="term" value="F:rRNA binding"/>
    <property type="evidence" value="ECO:0007669"/>
    <property type="project" value="UniProtKB-UniRule"/>
</dbReference>
<dbReference type="GO" id="GO:0003735">
    <property type="term" value="F:structural constituent of ribosome"/>
    <property type="evidence" value="ECO:0007669"/>
    <property type="project" value="InterPro"/>
</dbReference>
<dbReference type="GO" id="GO:0000027">
    <property type="term" value="P:ribosomal large subunit assembly"/>
    <property type="evidence" value="ECO:0007669"/>
    <property type="project" value="UniProtKB-UniRule"/>
</dbReference>
<dbReference type="GO" id="GO:0006412">
    <property type="term" value="P:translation"/>
    <property type="evidence" value="ECO:0007669"/>
    <property type="project" value="InterPro"/>
</dbReference>
<dbReference type="CDD" id="cd07026">
    <property type="entry name" value="Ribosomal_L20"/>
    <property type="match status" value="1"/>
</dbReference>
<dbReference type="FunFam" id="1.10.1900.20:FF:000001">
    <property type="entry name" value="50S ribosomal protein L20"/>
    <property type="match status" value="1"/>
</dbReference>
<dbReference type="Gene3D" id="6.10.160.10">
    <property type="match status" value="1"/>
</dbReference>
<dbReference type="Gene3D" id="1.10.1900.20">
    <property type="entry name" value="Ribosomal protein L20"/>
    <property type="match status" value="1"/>
</dbReference>
<dbReference type="HAMAP" id="MF_00382">
    <property type="entry name" value="Ribosomal_bL20"/>
    <property type="match status" value="1"/>
</dbReference>
<dbReference type="InterPro" id="IPR005813">
    <property type="entry name" value="Ribosomal_bL20"/>
</dbReference>
<dbReference type="InterPro" id="IPR049946">
    <property type="entry name" value="RIBOSOMAL_L20_CS"/>
</dbReference>
<dbReference type="InterPro" id="IPR035566">
    <property type="entry name" value="Ribosomal_protein_bL20_C"/>
</dbReference>
<dbReference type="NCBIfam" id="TIGR01032">
    <property type="entry name" value="rplT_bact"/>
    <property type="match status" value="1"/>
</dbReference>
<dbReference type="PANTHER" id="PTHR10986">
    <property type="entry name" value="39S RIBOSOMAL PROTEIN L20"/>
    <property type="match status" value="1"/>
</dbReference>
<dbReference type="Pfam" id="PF00453">
    <property type="entry name" value="Ribosomal_L20"/>
    <property type="match status" value="1"/>
</dbReference>
<dbReference type="PRINTS" id="PR00062">
    <property type="entry name" value="RIBOSOMALL20"/>
</dbReference>
<dbReference type="SUPFAM" id="SSF74731">
    <property type="entry name" value="Ribosomal protein L20"/>
    <property type="match status" value="1"/>
</dbReference>
<dbReference type="PROSITE" id="PS00937">
    <property type="entry name" value="RIBOSOMAL_L20"/>
    <property type="match status" value="1"/>
</dbReference>
<sequence>MSRARSGKVNKNRHKKILKLAKGYRGRAKNCFRIAIQKVEKALQYSYRDRRNRKRQFRALWIQRINAAVRQYDMTYSQFINGLKQANITVDRKVMANLAVHNADSFVHLVELTKKSLAKTA</sequence>
<reference key="1">
    <citation type="journal article" date="2007" name="Proc. Natl. Acad. Sci. U.S.A.">
        <title>The Orientia tsutsugamushi genome reveals massive proliferation of conjugative type IV secretion system and host-cell interaction genes.</title>
        <authorList>
            <person name="Cho N.-H."/>
            <person name="Kim H.-R."/>
            <person name="Lee J.-H."/>
            <person name="Kim S.-Y."/>
            <person name="Kim J."/>
            <person name="Cha S."/>
            <person name="Kim S.-Y."/>
            <person name="Darby A.C."/>
            <person name="Fuxelius H.-H."/>
            <person name="Yin J."/>
            <person name="Kim J.H."/>
            <person name="Kim J."/>
            <person name="Lee S.J."/>
            <person name="Koh Y.-S."/>
            <person name="Jang W.-J."/>
            <person name="Park K.-H."/>
            <person name="Andersson S.G.E."/>
            <person name="Choi M.-S."/>
            <person name="Kim I.-S."/>
        </authorList>
    </citation>
    <scope>NUCLEOTIDE SEQUENCE [LARGE SCALE GENOMIC DNA]</scope>
    <source>
        <strain>Boryong</strain>
    </source>
</reference>
<proteinExistence type="inferred from homology"/>
<name>RL20_ORITB</name>
<accession>A5CCZ4</accession>
<evidence type="ECO:0000255" key="1">
    <source>
        <dbReference type="HAMAP-Rule" id="MF_00382"/>
    </source>
</evidence>
<evidence type="ECO:0000305" key="2"/>
<comment type="function">
    <text evidence="1">Binds directly to 23S ribosomal RNA and is necessary for the in vitro assembly process of the 50S ribosomal subunit. It is not involved in the protein synthesizing functions of that subunit.</text>
</comment>
<comment type="similarity">
    <text evidence="1">Belongs to the bacterial ribosomal protein bL20 family.</text>
</comment>
<organism>
    <name type="scientific">Orientia tsutsugamushi (strain Boryong)</name>
    <name type="common">Rickettsia tsutsugamushi</name>
    <dbReference type="NCBI Taxonomy" id="357244"/>
    <lineage>
        <taxon>Bacteria</taxon>
        <taxon>Pseudomonadati</taxon>
        <taxon>Pseudomonadota</taxon>
        <taxon>Alphaproteobacteria</taxon>
        <taxon>Rickettsiales</taxon>
        <taxon>Rickettsiaceae</taxon>
        <taxon>Rickettsieae</taxon>
        <taxon>Orientia</taxon>
    </lineage>
</organism>
<feature type="chain" id="PRO_1000049025" description="Large ribosomal subunit protein bL20">
    <location>
        <begin position="1"/>
        <end position="121"/>
    </location>
</feature>
<keyword id="KW-1185">Reference proteome</keyword>
<keyword id="KW-0687">Ribonucleoprotein</keyword>
<keyword id="KW-0689">Ribosomal protein</keyword>
<keyword id="KW-0694">RNA-binding</keyword>
<keyword id="KW-0699">rRNA-binding</keyword>
<protein>
    <recommendedName>
        <fullName evidence="1">Large ribosomal subunit protein bL20</fullName>
    </recommendedName>
    <alternativeName>
        <fullName evidence="2">50S ribosomal protein L20</fullName>
    </alternativeName>
</protein>
<gene>
    <name evidence="1" type="primary">rplT</name>
    <name type="ordered locus">OTBS_0558</name>
</gene>